<sequence>MARPARRTVRRSERKNVEKGIAHIHSTFNNTIVTITDPSGNAIAWASAGTCGFSGTKKGTPFAAQLAAEKAAKMAMDHGMRTVEVYVKGPGAGREAAIRALQAAGLEVTLIKDVTPIPHNGCRPPKRRRV</sequence>
<accession>A4XLQ4</accession>
<keyword id="KW-0687">Ribonucleoprotein</keyword>
<keyword id="KW-0689">Ribosomal protein</keyword>
<keyword id="KW-0694">RNA-binding</keyword>
<keyword id="KW-0699">rRNA-binding</keyword>
<comment type="function">
    <text evidence="1">Located on the platform of the 30S subunit, it bridges several disparate RNA helices of the 16S rRNA. Forms part of the Shine-Dalgarno cleft in the 70S ribosome.</text>
</comment>
<comment type="subunit">
    <text evidence="1">Part of the 30S ribosomal subunit. Interacts with proteins S7 and S18. Binds to IF-3.</text>
</comment>
<comment type="similarity">
    <text evidence="1">Belongs to the universal ribosomal protein uS11 family.</text>
</comment>
<organism>
    <name type="scientific">Caldicellulosiruptor saccharolyticus (strain ATCC 43494 / DSM 8903 / Tp8T 6331)</name>
    <dbReference type="NCBI Taxonomy" id="351627"/>
    <lineage>
        <taxon>Bacteria</taxon>
        <taxon>Bacillati</taxon>
        <taxon>Bacillota</taxon>
        <taxon>Bacillota incertae sedis</taxon>
        <taxon>Caldicellulosiruptorales</taxon>
        <taxon>Caldicellulosiruptoraceae</taxon>
        <taxon>Caldicellulosiruptor</taxon>
    </lineage>
</organism>
<protein>
    <recommendedName>
        <fullName evidence="1">Small ribosomal subunit protein uS11</fullName>
    </recommendedName>
    <alternativeName>
        <fullName evidence="2">30S ribosomal protein S11</fullName>
    </alternativeName>
</protein>
<gene>
    <name evidence="1" type="primary">rpsK</name>
    <name type="ordered locus">Csac_2261</name>
</gene>
<proteinExistence type="inferred from homology"/>
<feature type="chain" id="PRO_1000073201" description="Small ribosomal subunit protein uS11">
    <location>
        <begin position="1"/>
        <end position="130"/>
    </location>
</feature>
<reference key="1">
    <citation type="submission" date="2007-04" db="EMBL/GenBank/DDBJ databases">
        <title>Genome sequence of the thermophilic hydrogen-producing bacterium Caldicellulosiruptor saccharolyticus DSM 8903.</title>
        <authorList>
            <person name="Copeland A."/>
            <person name="Lucas S."/>
            <person name="Lapidus A."/>
            <person name="Barry K."/>
            <person name="Detter J.C."/>
            <person name="Glavina del Rio T."/>
            <person name="Hammon N."/>
            <person name="Israni S."/>
            <person name="Dalin E."/>
            <person name="Tice H."/>
            <person name="Pitluck S."/>
            <person name="Kiss H."/>
            <person name="Brettin T."/>
            <person name="Bruce D."/>
            <person name="Han C."/>
            <person name="Schmutz J."/>
            <person name="Larimer F."/>
            <person name="Land M."/>
            <person name="Hauser L."/>
            <person name="Kyrpides N."/>
            <person name="Lykidis A."/>
            <person name="van de Werken H.J.G."/>
            <person name="Verhaart M.R.A."/>
            <person name="VanFossen A.L."/>
            <person name="Lewis D.L."/>
            <person name="Nichols J.D."/>
            <person name="Goorissen H.P."/>
            <person name="van Niel E.W.J."/>
            <person name="Stams F.J.M."/>
            <person name="Willquist K.U."/>
            <person name="Ward D.E."/>
            <person name="van der Oost J."/>
            <person name="Kelly R.M."/>
            <person name="Kengen S.M.W."/>
            <person name="Richardson P."/>
        </authorList>
    </citation>
    <scope>NUCLEOTIDE SEQUENCE [LARGE SCALE GENOMIC DNA]</scope>
    <source>
        <strain>ATCC 43494 / DSM 8903 / Tp8T 6331</strain>
    </source>
</reference>
<evidence type="ECO:0000255" key="1">
    <source>
        <dbReference type="HAMAP-Rule" id="MF_01310"/>
    </source>
</evidence>
<evidence type="ECO:0000305" key="2"/>
<dbReference type="EMBL" id="CP000679">
    <property type="protein sequence ID" value="ABP67839.1"/>
    <property type="molecule type" value="Genomic_DNA"/>
</dbReference>
<dbReference type="RefSeq" id="WP_011917765.1">
    <property type="nucleotide sequence ID" value="NC_009437.1"/>
</dbReference>
<dbReference type="SMR" id="A4XLQ4"/>
<dbReference type="STRING" id="351627.Csac_2261"/>
<dbReference type="GeneID" id="31773076"/>
<dbReference type="KEGG" id="csc:Csac_2261"/>
<dbReference type="eggNOG" id="COG0100">
    <property type="taxonomic scope" value="Bacteria"/>
</dbReference>
<dbReference type="HOGENOM" id="CLU_072439_5_0_9"/>
<dbReference type="OrthoDB" id="9806415at2"/>
<dbReference type="Proteomes" id="UP000000256">
    <property type="component" value="Chromosome"/>
</dbReference>
<dbReference type="GO" id="GO:1990904">
    <property type="term" value="C:ribonucleoprotein complex"/>
    <property type="evidence" value="ECO:0007669"/>
    <property type="project" value="UniProtKB-KW"/>
</dbReference>
<dbReference type="GO" id="GO:0005840">
    <property type="term" value="C:ribosome"/>
    <property type="evidence" value="ECO:0007669"/>
    <property type="project" value="UniProtKB-KW"/>
</dbReference>
<dbReference type="GO" id="GO:0019843">
    <property type="term" value="F:rRNA binding"/>
    <property type="evidence" value="ECO:0007669"/>
    <property type="project" value="UniProtKB-UniRule"/>
</dbReference>
<dbReference type="GO" id="GO:0003735">
    <property type="term" value="F:structural constituent of ribosome"/>
    <property type="evidence" value="ECO:0007669"/>
    <property type="project" value="InterPro"/>
</dbReference>
<dbReference type="GO" id="GO:0006412">
    <property type="term" value="P:translation"/>
    <property type="evidence" value="ECO:0007669"/>
    <property type="project" value="UniProtKB-UniRule"/>
</dbReference>
<dbReference type="FunFam" id="3.30.420.80:FF:000001">
    <property type="entry name" value="30S ribosomal protein S11"/>
    <property type="match status" value="1"/>
</dbReference>
<dbReference type="Gene3D" id="3.30.420.80">
    <property type="entry name" value="Ribosomal protein S11"/>
    <property type="match status" value="1"/>
</dbReference>
<dbReference type="HAMAP" id="MF_01310">
    <property type="entry name" value="Ribosomal_uS11"/>
    <property type="match status" value="1"/>
</dbReference>
<dbReference type="InterPro" id="IPR001971">
    <property type="entry name" value="Ribosomal_uS11"/>
</dbReference>
<dbReference type="InterPro" id="IPR019981">
    <property type="entry name" value="Ribosomal_uS11_bac-type"/>
</dbReference>
<dbReference type="InterPro" id="IPR018102">
    <property type="entry name" value="Ribosomal_uS11_CS"/>
</dbReference>
<dbReference type="InterPro" id="IPR036967">
    <property type="entry name" value="Ribosomal_uS11_sf"/>
</dbReference>
<dbReference type="NCBIfam" id="NF003698">
    <property type="entry name" value="PRK05309.1"/>
    <property type="match status" value="1"/>
</dbReference>
<dbReference type="NCBIfam" id="TIGR03632">
    <property type="entry name" value="uS11_bact"/>
    <property type="match status" value="1"/>
</dbReference>
<dbReference type="PANTHER" id="PTHR11759">
    <property type="entry name" value="40S RIBOSOMAL PROTEIN S14/30S RIBOSOMAL PROTEIN S11"/>
    <property type="match status" value="1"/>
</dbReference>
<dbReference type="Pfam" id="PF00411">
    <property type="entry name" value="Ribosomal_S11"/>
    <property type="match status" value="1"/>
</dbReference>
<dbReference type="PIRSF" id="PIRSF002131">
    <property type="entry name" value="Ribosomal_S11"/>
    <property type="match status" value="1"/>
</dbReference>
<dbReference type="SUPFAM" id="SSF53137">
    <property type="entry name" value="Translational machinery components"/>
    <property type="match status" value="1"/>
</dbReference>
<dbReference type="PROSITE" id="PS00054">
    <property type="entry name" value="RIBOSOMAL_S11"/>
    <property type="match status" value="1"/>
</dbReference>
<name>RS11_CALS8</name>